<reference key="1">
    <citation type="journal article" date="1997" name="J. Bacteriol.">
        <title>Identification and characterization of cell wall-cell division gene clusters in pathogenic Gram-positive cocci.</title>
        <authorList>
            <person name="Pucci M.J."/>
            <person name="Thanassi J.A."/>
            <person name="Discotto L.F."/>
            <person name="Kessler R.E."/>
            <person name="Dougherty T.J."/>
        </authorList>
    </citation>
    <scope>NUCLEOTIDE SEQUENCE [GENOMIC DNA]</scope>
</reference>
<reference key="2">
    <citation type="book" date="2006" name="Gram positive pathogens, 2nd edition">
        <title>The Staphylococcus aureus NCTC 8325 genome.</title>
        <editorList>
            <person name="Fischetti V."/>
            <person name="Novick R."/>
            <person name="Ferretti J."/>
            <person name="Portnoy D."/>
            <person name="Rood J."/>
        </editorList>
        <authorList>
            <person name="Gillaspy A.F."/>
            <person name="Worrell V."/>
            <person name="Orvis J."/>
            <person name="Roe B.A."/>
            <person name="Dyer D.W."/>
            <person name="Iandolo J.J."/>
        </authorList>
    </citation>
    <scope>NUCLEOTIDE SEQUENCE [LARGE SCALE GENOMIC DNA]</scope>
    <source>
        <strain>NCTC 8325 / PS 47</strain>
    </source>
</reference>
<reference key="3">
    <citation type="journal article" date="2003" name="Mol. Microbiol.">
        <title>Dispersed mode of Staphylococcus aureus cell wall synthesis in the absence of the division machinery.</title>
        <authorList>
            <person name="Pinho M.G."/>
            <person name="Errington J."/>
        </authorList>
    </citation>
    <scope>FUNCTION</scope>
</reference>
<organism>
    <name type="scientific">Staphylococcus aureus (strain NCTC 8325 / PS 47)</name>
    <dbReference type="NCBI Taxonomy" id="93061"/>
    <lineage>
        <taxon>Bacteria</taxon>
        <taxon>Bacillati</taxon>
        <taxon>Bacillota</taxon>
        <taxon>Bacilli</taxon>
        <taxon>Bacillales</taxon>
        <taxon>Staphylococcaceae</taxon>
        <taxon>Staphylococcus</taxon>
    </lineage>
</organism>
<gene>
    <name evidence="1" type="primary">ftsZ</name>
    <name type="ordered locus">SAOUHSC_01150</name>
</gene>
<proteinExistence type="evidence at protein level"/>
<sequence length="390" mass="41037">MLEFEQGFNHLATLKVIGVGGGGNNAVNRMIDHGMNNVEFIAINTDGQALNLSKAESKIQIGEKLTRGLGAGANPEIGKKAAEESREQIEDAIQGADMVFVTSGMGGGTGTGAAPVVAKIAKEMGALTVGVVTRPFSFEGRKRQTQAAAGVEAMKAAVDTLIVIPNDRLLDIVDKSTPMMEAFKEADNVLRQGVQGISDLIAVSGEVNLDFADVKTIMSNQGSALMGIGVSSGENRAVEAAKKAISSPLLETSIVGAQGVLMNITGGESLSLFEAQEAADIVQDAADEDVNMIFGTVINPELQDEIVVTVIATGFDDKPTSHGRKSGSTGFGTSVNTSSNATSKDESFTSNSSNAQATDSVSERTHTTKEDDIPSFIRNREERRSRRTRR</sequence>
<feature type="chain" id="PRO_0000291778" description="Cell division protein FtsZ">
    <location>
        <begin position="1"/>
        <end position="390"/>
    </location>
</feature>
<feature type="region of interest" description="Disordered" evidence="2">
    <location>
        <begin position="315"/>
        <end position="390"/>
    </location>
</feature>
<feature type="compositionally biased region" description="Polar residues" evidence="2">
    <location>
        <begin position="326"/>
        <end position="360"/>
    </location>
</feature>
<feature type="compositionally biased region" description="Basic and acidic residues" evidence="2">
    <location>
        <begin position="361"/>
        <end position="384"/>
    </location>
</feature>
<feature type="binding site" evidence="1">
    <location>
        <begin position="21"/>
        <end position="25"/>
    </location>
    <ligand>
        <name>GTP</name>
        <dbReference type="ChEBI" id="CHEBI:37565"/>
    </ligand>
</feature>
<feature type="binding site" evidence="1">
    <location>
        <begin position="108"/>
        <end position="110"/>
    </location>
    <ligand>
        <name>GTP</name>
        <dbReference type="ChEBI" id="CHEBI:37565"/>
    </ligand>
</feature>
<feature type="binding site" evidence="1">
    <location>
        <position position="139"/>
    </location>
    <ligand>
        <name>GTP</name>
        <dbReference type="ChEBI" id="CHEBI:37565"/>
    </ligand>
</feature>
<feature type="binding site" evidence="1">
    <location>
        <position position="143"/>
    </location>
    <ligand>
        <name>GTP</name>
        <dbReference type="ChEBI" id="CHEBI:37565"/>
    </ligand>
</feature>
<feature type="binding site" evidence="1">
    <location>
        <position position="187"/>
    </location>
    <ligand>
        <name>GTP</name>
        <dbReference type="ChEBI" id="CHEBI:37565"/>
    </ligand>
</feature>
<feature type="strand" evidence="4">
    <location>
        <begin position="14"/>
        <end position="19"/>
    </location>
</feature>
<feature type="helix" evidence="4">
    <location>
        <begin position="20"/>
        <end position="33"/>
    </location>
</feature>
<feature type="strand" evidence="4">
    <location>
        <begin position="37"/>
        <end position="45"/>
    </location>
</feature>
<feature type="helix" evidence="4">
    <location>
        <begin position="47"/>
        <end position="51"/>
    </location>
</feature>
<feature type="strand" evidence="4">
    <location>
        <begin position="56"/>
        <end position="60"/>
    </location>
</feature>
<feature type="helix" evidence="4">
    <location>
        <begin position="63"/>
        <end position="66"/>
    </location>
</feature>
<feature type="helix" evidence="4">
    <location>
        <begin position="75"/>
        <end position="84"/>
    </location>
</feature>
<feature type="helix" evidence="4">
    <location>
        <begin position="86"/>
        <end position="93"/>
    </location>
</feature>
<feature type="strand" evidence="4">
    <location>
        <begin position="97"/>
        <end position="104"/>
    </location>
</feature>
<feature type="helix" evidence="4">
    <location>
        <begin position="109"/>
        <end position="123"/>
    </location>
</feature>
<feature type="strand" evidence="4">
    <location>
        <begin position="127"/>
        <end position="134"/>
    </location>
</feature>
<feature type="helix" evidence="4">
    <location>
        <begin position="137"/>
        <end position="139"/>
    </location>
</feature>
<feature type="helix" evidence="4">
    <location>
        <begin position="141"/>
        <end position="157"/>
    </location>
</feature>
<feature type="strand" evidence="4">
    <location>
        <begin position="159"/>
        <end position="165"/>
    </location>
</feature>
<feature type="helix" evidence="4">
    <location>
        <begin position="166"/>
        <end position="171"/>
    </location>
</feature>
<feature type="helix" evidence="4">
    <location>
        <begin position="179"/>
        <end position="202"/>
    </location>
</feature>
<feature type="helix" evidence="4">
    <location>
        <begin position="211"/>
        <end position="218"/>
    </location>
</feature>
<feature type="strand" evidence="4">
    <location>
        <begin position="222"/>
        <end position="231"/>
    </location>
</feature>
<feature type="helix" evidence="4">
    <location>
        <begin position="236"/>
        <end position="245"/>
    </location>
</feature>
<feature type="strand" evidence="4">
    <location>
        <begin position="258"/>
        <end position="266"/>
    </location>
</feature>
<feature type="helix" evidence="4">
    <location>
        <begin position="272"/>
        <end position="286"/>
    </location>
</feature>
<feature type="strand" evidence="4">
    <location>
        <begin position="291"/>
        <end position="298"/>
    </location>
</feature>
<feature type="strand" evidence="4">
    <location>
        <begin position="306"/>
        <end position="313"/>
    </location>
</feature>
<accession>Q2FZ89</accession>
<evidence type="ECO:0000255" key="1">
    <source>
        <dbReference type="HAMAP-Rule" id="MF_00909"/>
    </source>
</evidence>
<evidence type="ECO:0000256" key="2">
    <source>
        <dbReference type="SAM" id="MobiDB-lite"/>
    </source>
</evidence>
<evidence type="ECO:0000269" key="3">
    <source>
    </source>
</evidence>
<evidence type="ECO:0007829" key="4">
    <source>
        <dbReference type="PDB" id="7OHH"/>
    </source>
</evidence>
<comment type="function">
    <text evidence="1 3">Essential cell division protein that forms a contractile ring structure (Z ring) at the future cell division site. The regulation of the ring assembly controls the timing and the location of cell division. One of the functions of the FtsZ ring is to recruit other cell division proteins to the septum to produce a new cell wall between the dividing cells. Binds GTP and shows GTPase activity.</text>
</comment>
<comment type="subunit">
    <text evidence="1">Homodimer. Polymerizes to form a dynamic ring structure in a strictly GTP-dependent manner. Interacts directly with several other division proteins.</text>
</comment>
<comment type="subcellular location">
    <subcellularLocation>
        <location evidence="1">Cytoplasm</location>
    </subcellularLocation>
    <text evidence="1">Assembles at midcell at the inner surface of the cytoplasmic membrane.</text>
</comment>
<comment type="similarity">
    <text evidence="1">Belongs to the FtsZ family.</text>
</comment>
<keyword id="KW-0002">3D-structure</keyword>
<keyword id="KW-0131">Cell cycle</keyword>
<keyword id="KW-0132">Cell division</keyword>
<keyword id="KW-0963">Cytoplasm</keyword>
<keyword id="KW-0342">GTP-binding</keyword>
<keyword id="KW-0547">Nucleotide-binding</keyword>
<keyword id="KW-1185">Reference proteome</keyword>
<keyword id="KW-0717">Septation</keyword>
<dbReference type="EMBL" id="U94706">
    <property type="protein sequence ID" value="AAC45629.1"/>
    <property type="molecule type" value="Genomic_DNA"/>
</dbReference>
<dbReference type="EMBL" id="CP000253">
    <property type="protein sequence ID" value="ABD30260.1"/>
    <property type="molecule type" value="Genomic_DNA"/>
</dbReference>
<dbReference type="RefSeq" id="WP_000888997.1">
    <property type="nucleotide sequence ID" value="NZ_LS483365.1"/>
</dbReference>
<dbReference type="RefSeq" id="YP_499692.1">
    <property type="nucleotide sequence ID" value="NC_007795.1"/>
</dbReference>
<dbReference type="PDB" id="5H5G">
    <property type="method" value="X-ray"/>
    <property type="resolution" value="2.20 A"/>
    <property type="chains" value="A/B=12-316"/>
</dbReference>
<dbReference type="PDB" id="5H5H">
    <property type="method" value="X-ray"/>
    <property type="resolution" value="1.70 A"/>
    <property type="chains" value="A=12-316"/>
</dbReference>
<dbReference type="PDB" id="5H5I">
    <property type="method" value="X-ray"/>
    <property type="resolution" value="1.90 A"/>
    <property type="chains" value="A=12-316"/>
</dbReference>
<dbReference type="PDB" id="5XDT">
    <property type="method" value="X-ray"/>
    <property type="resolution" value="1.30 A"/>
    <property type="chains" value="A=12-316"/>
</dbReference>
<dbReference type="PDB" id="5XDU">
    <property type="method" value="X-ray"/>
    <property type="resolution" value="2.00 A"/>
    <property type="chains" value="A=12-316"/>
</dbReference>
<dbReference type="PDB" id="5XDV">
    <property type="method" value="X-ray"/>
    <property type="resolution" value="1.70 A"/>
    <property type="chains" value="A=12-316"/>
</dbReference>
<dbReference type="PDB" id="5XDW">
    <property type="method" value="X-ray"/>
    <property type="resolution" value="2.00 A"/>
    <property type="chains" value="A=12-316"/>
</dbReference>
<dbReference type="PDB" id="6RVM">
    <property type="method" value="X-ray"/>
    <property type="resolution" value="2.15 A"/>
    <property type="chains" value="A/B/C/D=12-316"/>
</dbReference>
<dbReference type="PDB" id="6RVN">
    <property type="method" value="X-ray"/>
    <property type="resolution" value="1.24 A"/>
    <property type="chains" value="A=12-315"/>
</dbReference>
<dbReference type="PDB" id="6RVP">
    <property type="method" value="X-ray"/>
    <property type="resolution" value="1.16 A"/>
    <property type="chains" value="A=12-315"/>
</dbReference>
<dbReference type="PDB" id="6RVQ">
    <property type="method" value="X-ray"/>
    <property type="resolution" value="1.14 A"/>
    <property type="chains" value="A=12-315"/>
</dbReference>
<dbReference type="PDB" id="6SI9">
    <property type="method" value="X-ray"/>
    <property type="resolution" value="1.90 A"/>
    <property type="chains" value="A=12-316"/>
</dbReference>
<dbReference type="PDB" id="6YD1">
    <property type="method" value="X-ray"/>
    <property type="resolution" value="1.70 A"/>
    <property type="chains" value="A=12-315"/>
</dbReference>
<dbReference type="PDB" id="6YD5">
    <property type="method" value="X-ray"/>
    <property type="resolution" value="1.55 A"/>
    <property type="chains" value="A=12-315"/>
</dbReference>
<dbReference type="PDB" id="6YD6">
    <property type="method" value="X-ray"/>
    <property type="resolution" value="1.70 A"/>
    <property type="chains" value="A=12-315"/>
</dbReference>
<dbReference type="PDB" id="7OHH">
    <property type="method" value="X-ray"/>
    <property type="resolution" value="1.45 A"/>
    <property type="chains" value="A=12-316"/>
</dbReference>
<dbReference type="PDB" id="7OHK">
    <property type="method" value="X-ray"/>
    <property type="resolution" value="1.75 A"/>
    <property type="chains" value="A=12-316"/>
</dbReference>
<dbReference type="PDB" id="7OHL">
    <property type="method" value="X-ray"/>
    <property type="resolution" value="1.75 A"/>
    <property type="chains" value="A=12-316"/>
</dbReference>
<dbReference type="PDB" id="7OHN">
    <property type="method" value="X-ray"/>
    <property type="resolution" value="1.62 A"/>
    <property type="chains" value="A=12-316"/>
</dbReference>
<dbReference type="PDB" id="7OI2">
    <property type="method" value="X-ray"/>
    <property type="resolution" value="1.90 A"/>
    <property type="chains" value="A=12-316"/>
</dbReference>
<dbReference type="PDB" id="7OJA">
    <property type="method" value="X-ray"/>
    <property type="resolution" value="2.22 A"/>
    <property type="chains" value="A=12-316"/>
</dbReference>
<dbReference type="PDB" id="7OJB">
    <property type="method" value="X-ray"/>
    <property type="resolution" value="1.70 A"/>
    <property type="chains" value="A=12-316"/>
</dbReference>
<dbReference type="PDB" id="7OJC">
    <property type="method" value="X-ray"/>
    <property type="resolution" value="1.95 A"/>
    <property type="chains" value="A=12-316"/>
</dbReference>
<dbReference type="PDB" id="7OJD">
    <property type="method" value="X-ray"/>
    <property type="resolution" value="1.82 A"/>
    <property type="chains" value="A=12-316"/>
</dbReference>
<dbReference type="PDB" id="7OJZ">
    <property type="method" value="X-ray"/>
    <property type="resolution" value="1.65 A"/>
    <property type="chains" value="A=12-316"/>
</dbReference>
<dbReference type="PDB" id="7OMJ">
    <property type="method" value="X-ray"/>
    <property type="resolution" value="1.57 A"/>
    <property type="chains" value="A=12-316"/>
</dbReference>
<dbReference type="PDB" id="7OMP">
    <property type="method" value="X-ray"/>
    <property type="resolution" value="1.52 A"/>
    <property type="chains" value="A=12-316"/>
</dbReference>
<dbReference type="PDB" id="7OMQ">
    <property type="method" value="X-ray"/>
    <property type="resolution" value="1.45 A"/>
    <property type="chains" value="A=12-316"/>
</dbReference>
<dbReference type="PDB" id="7ON2">
    <property type="method" value="X-ray"/>
    <property type="resolution" value="1.69 A"/>
    <property type="chains" value="A=12-316"/>
</dbReference>
<dbReference type="PDB" id="7ON3">
    <property type="method" value="X-ray"/>
    <property type="resolution" value="2.32 A"/>
    <property type="chains" value="A=12-316"/>
</dbReference>
<dbReference type="PDB" id="7ON4">
    <property type="method" value="X-ray"/>
    <property type="resolution" value="1.79 A"/>
    <property type="chains" value="A=12-316"/>
</dbReference>
<dbReference type="PDBsum" id="5H5G"/>
<dbReference type="PDBsum" id="5H5H"/>
<dbReference type="PDBsum" id="5H5I"/>
<dbReference type="PDBsum" id="5XDT"/>
<dbReference type="PDBsum" id="5XDU"/>
<dbReference type="PDBsum" id="5XDV"/>
<dbReference type="PDBsum" id="5XDW"/>
<dbReference type="PDBsum" id="6RVM"/>
<dbReference type="PDBsum" id="6RVN"/>
<dbReference type="PDBsum" id="6RVP"/>
<dbReference type="PDBsum" id="6RVQ"/>
<dbReference type="PDBsum" id="6SI9"/>
<dbReference type="PDBsum" id="6YD1"/>
<dbReference type="PDBsum" id="6YD5"/>
<dbReference type="PDBsum" id="6YD6"/>
<dbReference type="PDBsum" id="7OHH"/>
<dbReference type="PDBsum" id="7OHK"/>
<dbReference type="PDBsum" id="7OHL"/>
<dbReference type="PDBsum" id="7OHN"/>
<dbReference type="PDBsum" id="7OI2"/>
<dbReference type="PDBsum" id="7OJA"/>
<dbReference type="PDBsum" id="7OJB"/>
<dbReference type="PDBsum" id="7OJC"/>
<dbReference type="PDBsum" id="7OJD"/>
<dbReference type="PDBsum" id="7OJZ"/>
<dbReference type="PDBsum" id="7OMJ"/>
<dbReference type="PDBsum" id="7OMP"/>
<dbReference type="PDBsum" id="7OMQ"/>
<dbReference type="PDBsum" id="7ON2"/>
<dbReference type="PDBsum" id="7ON3"/>
<dbReference type="PDBsum" id="7ON4"/>
<dbReference type="SMR" id="Q2FZ89"/>
<dbReference type="STRING" id="93061.SAOUHSC_01150"/>
<dbReference type="PaxDb" id="1280-SAXN108_1184"/>
<dbReference type="GeneID" id="3920710"/>
<dbReference type="GeneID" id="98345502"/>
<dbReference type="KEGG" id="sao:SAOUHSC_01150"/>
<dbReference type="PATRIC" id="fig|93061.5.peg.1055"/>
<dbReference type="eggNOG" id="COG0206">
    <property type="taxonomic scope" value="Bacteria"/>
</dbReference>
<dbReference type="HOGENOM" id="CLU_024865_0_1_9"/>
<dbReference type="OrthoDB" id="9813375at2"/>
<dbReference type="PRO" id="PR:Q2FZ89"/>
<dbReference type="Proteomes" id="UP000008816">
    <property type="component" value="Chromosome"/>
</dbReference>
<dbReference type="GO" id="GO:0032153">
    <property type="term" value="C:cell division site"/>
    <property type="evidence" value="ECO:0000318"/>
    <property type="project" value="GO_Central"/>
</dbReference>
<dbReference type="GO" id="GO:0005737">
    <property type="term" value="C:cytoplasm"/>
    <property type="evidence" value="ECO:0000318"/>
    <property type="project" value="GO_Central"/>
</dbReference>
<dbReference type="GO" id="GO:0005525">
    <property type="term" value="F:GTP binding"/>
    <property type="evidence" value="ECO:0000318"/>
    <property type="project" value="GO_Central"/>
</dbReference>
<dbReference type="GO" id="GO:0003924">
    <property type="term" value="F:GTPase activity"/>
    <property type="evidence" value="ECO:0000318"/>
    <property type="project" value="GO_Central"/>
</dbReference>
<dbReference type="GO" id="GO:0051301">
    <property type="term" value="P:cell division"/>
    <property type="evidence" value="ECO:0000318"/>
    <property type="project" value="GO_Central"/>
</dbReference>
<dbReference type="GO" id="GO:0000917">
    <property type="term" value="P:division septum assembly"/>
    <property type="evidence" value="ECO:0007669"/>
    <property type="project" value="UniProtKB-KW"/>
</dbReference>
<dbReference type="GO" id="GO:0043093">
    <property type="term" value="P:FtsZ-dependent cytokinesis"/>
    <property type="evidence" value="ECO:0007669"/>
    <property type="project" value="UniProtKB-UniRule"/>
</dbReference>
<dbReference type="GO" id="GO:0051258">
    <property type="term" value="P:protein polymerization"/>
    <property type="evidence" value="ECO:0007669"/>
    <property type="project" value="UniProtKB-UniRule"/>
</dbReference>
<dbReference type="CDD" id="cd02201">
    <property type="entry name" value="FtsZ_type1"/>
    <property type="match status" value="1"/>
</dbReference>
<dbReference type="FunFam" id="3.30.1330.20:FF:000005">
    <property type="entry name" value="Cell division protein FtsZ"/>
    <property type="match status" value="1"/>
</dbReference>
<dbReference type="FunFam" id="3.40.50.1440:FF:000023">
    <property type="entry name" value="Cell division protein FtsZ"/>
    <property type="match status" value="1"/>
</dbReference>
<dbReference type="Gene3D" id="3.30.1330.20">
    <property type="entry name" value="Tubulin/FtsZ, C-terminal domain"/>
    <property type="match status" value="1"/>
</dbReference>
<dbReference type="Gene3D" id="3.40.50.1440">
    <property type="entry name" value="Tubulin/FtsZ, GTPase domain"/>
    <property type="match status" value="1"/>
</dbReference>
<dbReference type="HAMAP" id="MF_00909">
    <property type="entry name" value="FtsZ"/>
    <property type="match status" value="1"/>
</dbReference>
<dbReference type="InterPro" id="IPR000158">
    <property type="entry name" value="Cell_div_FtsZ"/>
</dbReference>
<dbReference type="InterPro" id="IPR020805">
    <property type="entry name" value="Cell_div_FtsZ_CS"/>
</dbReference>
<dbReference type="InterPro" id="IPR045061">
    <property type="entry name" value="FtsZ/CetZ"/>
</dbReference>
<dbReference type="InterPro" id="IPR024757">
    <property type="entry name" value="FtsZ_C"/>
</dbReference>
<dbReference type="InterPro" id="IPR008280">
    <property type="entry name" value="Tub_FtsZ_C"/>
</dbReference>
<dbReference type="InterPro" id="IPR037103">
    <property type="entry name" value="Tubulin/FtsZ-like_C"/>
</dbReference>
<dbReference type="InterPro" id="IPR018316">
    <property type="entry name" value="Tubulin/FtsZ_2-layer-sand-dom"/>
</dbReference>
<dbReference type="InterPro" id="IPR036525">
    <property type="entry name" value="Tubulin/FtsZ_GTPase_sf"/>
</dbReference>
<dbReference type="InterPro" id="IPR003008">
    <property type="entry name" value="Tubulin_FtsZ_GTPase"/>
</dbReference>
<dbReference type="NCBIfam" id="TIGR00065">
    <property type="entry name" value="ftsZ"/>
    <property type="match status" value="1"/>
</dbReference>
<dbReference type="PANTHER" id="PTHR30314">
    <property type="entry name" value="CELL DIVISION PROTEIN FTSZ-RELATED"/>
    <property type="match status" value="1"/>
</dbReference>
<dbReference type="PANTHER" id="PTHR30314:SF3">
    <property type="entry name" value="MITOCHONDRIAL DIVISION PROTEIN FSZA"/>
    <property type="match status" value="1"/>
</dbReference>
<dbReference type="Pfam" id="PF12327">
    <property type="entry name" value="FtsZ_C"/>
    <property type="match status" value="1"/>
</dbReference>
<dbReference type="Pfam" id="PF00091">
    <property type="entry name" value="Tubulin"/>
    <property type="match status" value="1"/>
</dbReference>
<dbReference type="PRINTS" id="PR00423">
    <property type="entry name" value="CELLDVISFTSZ"/>
</dbReference>
<dbReference type="SMART" id="SM00864">
    <property type="entry name" value="Tubulin"/>
    <property type="match status" value="1"/>
</dbReference>
<dbReference type="SMART" id="SM00865">
    <property type="entry name" value="Tubulin_C"/>
    <property type="match status" value="1"/>
</dbReference>
<dbReference type="SUPFAM" id="SSF55307">
    <property type="entry name" value="Tubulin C-terminal domain-like"/>
    <property type="match status" value="1"/>
</dbReference>
<dbReference type="SUPFAM" id="SSF52490">
    <property type="entry name" value="Tubulin nucleotide-binding domain-like"/>
    <property type="match status" value="1"/>
</dbReference>
<dbReference type="PROSITE" id="PS01134">
    <property type="entry name" value="FTSZ_1"/>
    <property type="match status" value="1"/>
</dbReference>
<dbReference type="PROSITE" id="PS01135">
    <property type="entry name" value="FTSZ_2"/>
    <property type="match status" value="1"/>
</dbReference>
<protein>
    <recommendedName>
        <fullName evidence="1">Cell division protein FtsZ</fullName>
    </recommendedName>
</protein>
<name>FTSZ_STAA8</name>